<protein>
    <recommendedName>
        <fullName>Casein kinase II subunit beta'</fullName>
        <shortName>CK II beta'</shortName>
        <shortName>DmCKII-beta'</shortName>
    </recommendedName>
</protein>
<name>CSK2C_DROME</name>
<proteinExistence type="evidence at protein level"/>
<evidence type="ECO:0000250" key="1"/>
<evidence type="ECO:0000305" key="2"/>
<sequence length="219" mass="24966">MTDSDESSWIHWFCKQRGNEFFCEVDEEYIQDKFNLNFLDSNVKNYKCALEVILDLNPGSASEDPAEPELEASAEKLYGLIHARFILTNRGIELMLDKYNKGEFGTCPRAFCHSQPVLPIGLSDNPGEDMVRIYCPKCNDVYIPKASRHSNLDGAFFGTGFPHMFFMEKPDARPKRAKQKFVPRLYGFKIHPTAYRTAAEIQKDVTMTPVGEIDSPSHI</sequence>
<accession>O96863</accession>
<accession>Q53XE8</accession>
<accession>Q9V919</accession>
<organism>
    <name type="scientific">Drosophila melanogaster</name>
    <name type="common">Fruit fly</name>
    <dbReference type="NCBI Taxonomy" id="7227"/>
    <lineage>
        <taxon>Eukaryota</taxon>
        <taxon>Metazoa</taxon>
        <taxon>Ecdysozoa</taxon>
        <taxon>Arthropoda</taxon>
        <taxon>Hexapoda</taxon>
        <taxon>Insecta</taxon>
        <taxon>Pterygota</taxon>
        <taxon>Neoptera</taxon>
        <taxon>Endopterygota</taxon>
        <taxon>Diptera</taxon>
        <taxon>Brachycera</taxon>
        <taxon>Muscomorpha</taxon>
        <taxon>Ephydroidea</taxon>
        <taxon>Drosophilidae</taxon>
        <taxon>Drosophila</taxon>
        <taxon>Sophophora</taxon>
    </lineage>
</organism>
<keyword id="KW-0597">Phosphoprotein</keyword>
<keyword id="KW-1185">Reference proteome</keyword>
<keyword id="KW-0879">Wnt signaling pathway</keyword>
<reference key="1">
    <citation type="journal article" date="1999" name="Mol. Cell Biol. Res. Commun.">
        <title>A gene located at 56F1-2 in Drosophila melanogaster encodes a novel metazoan beta-like subunit of casein kinase II.</title>
        <authorList>
            <person name="Bidwai A.P."/>
            <person name="Zhao W.F."/>
            <person name="Glover C.V.C."/>
        </authorList>
    </citation>
    <scope>NUCLEOTIDE SEQUENCE [MRNA]</scope>
    <source>
        <tissue>Embryo</tissue>
    </source>
</reference>
<reference key="2">
    <citation type="journal article" date="2000" name="Science">
        <title>The genome sequence of Drosophila melanogaster.</title>
        <authorList>
            <person name="Adams M.D."/>
            <person name="Celniker S.E."/>
            <person name="Holt R.A."/>
            <person name="Evans C.A."/>
            <person name="Gocayne J.D."/>
            <person name="Amanatides P.G."/>
            <person name="Scherer S.E."/>
            <person name="Li P.W."/>
            <person name="Hoskins R.A."/>
            <person name="Galle R.F."/>
            <person name="George R.A."/>
            <person name="Lewis S.E."/>
            <person name="Richards S."/>
            <person name="Ashburner M."/>
            <person name="Henderson S.N."/>
            <person name="Sutton G.G."/>
            <person name="Wortman J.R."/>
            <person name="Yandell M.D."/>
            <person name="Zhang Q."/>
            <person name="Chen L.X."/>
            <person name="Brandon R.C."/>
            <person name="Rogers Y.-H.C."/>
            <person name="Blazej R.G."/>
            <person name="Champe M."/>
            <person name="Pfeiffer B.D."/>
            <person name="Wan K.H."/>
            <person name="Doyle C."/>
            <person name="Baxter E.G."/>
            <person name="Helt G."/>
            <person name="Nelson C.R."/>
            <person name="Miklos G.L.G."/>
            <person name="Abril J.F."/>
            <person name="Agbayani A."/>
            <person name="An H.-J."/>
            <person name="Andrews-Pfannkoch C."/>
            <person name="Baldwin D."/>
            <person name="Ballew R.M."/>
            <person name="Basu A."/>
            <person name="Baxendale J."/>
            <person name="Bayraktaroglu L."/>
            <person name="Beasley E.M."/>
            <person name="Beeson K.Y."/>
            <person name="Benos P.V."/>
            <person name="Berman B.P."/>
            <person name="Bhandari D."/>
            <person name="Bolshakov S."/>
            <person name="Borkova D."/>
            <person name="Botchan M.R."/>
            <person name="Bouck J."/>
            <person name="Brokstein P."/>
            <person name="Brottier P."/>
            <person name="Burtis K.C."/>
            <person name="Busam D.A."/>
            <person name="Butler H."/>
            <person name="Cadieu E."/>
            <person name="Center A."/>
            <person name="Chandra I."/>
            <person name="Cherry J.M."/>
            <person name="Cawley S."/>
            <person name="Dahlke C."/>
            <person name="Davenport L.B."/>
            <person name="Davies P."/>
            <person name="de Pablos B."/>
            <person name="Delcher A."/>
            <person name="Deng Z."/>
            <person name="Mays A.D."/>
            <person name="Dew I."/>
            <person name="Dietz S.M."/>
            <person name="Dodson K."/>
            <person name="Doup L.E."/>
            <person name="Downes M."/>
            <person name="Dugan-Rocha S."/>
            <person name="Dunkov B.C."/>
            <person name="Dunn P."/>
            <person name="Durbin K.J."/>
            <person name="Evangelista C.C."/>
            <person name="Ferraz C."/>
            <person name="Ferriera S."/>
            <person name="Fleischmann W."/>
            <person name="Fosler C."/>
            <person name="Gabrielian A.E."/>
            <person name="Garg N.S."/>
            <person name="Gelbart W.M."/>
            <person name="Glasser K."/>
            <person name="Glodek A."/>
            <person name="Gong F."/>
            <person name="Gorrell J.H."/>
            <person name="Gu Z."/>
            <person name="Guan P."/>
            <person name="Harris M."/>
            <person name="Harris N.L."/>
            <person name="Harvey D.A."/>
            <person name="Heiman T.J."/>
            <person name="Hernandez J.R."/>
            <person name="Houck J."/>
            <person name="Hostin D."/>
            <person name="Houston K.A."/>
            <person name="Howland T.J."/>
            <person name="Wei M.-H."/>
            <person name="Ibegwam C."/>
            <person name="Jalali M."/>
            <person name="Kalush F."/>
            <person name="Karpen G.H."/>
            <person name="Ke Z."/>
            <person name="Kennison J.A."/>
            <person name="Ketchum K.A."/>
            <person name="Kimmel B.E."/>
            <person name="Kodira C.D."/>
            <person name="Kraft C.L."/>
            <person name="Kravitz S."/>
            <person name="Kulp D."/>
            <person name="Lai Z."/>
            <person name="Lasko P."/>
            <person name="Lei Y."/>
            <person name="Levitsky A.A."/>
            <person name="Li J.H."/>
            <person name="Li Z."/>
            <person name="Liang Y."/>
            <person name="Lin X."/>
            <person name="Liu X."/>
            <person name="Mattei B."/>
            <person name="McIntosh T.C."/>
            <person name="McLeod M.P."/>
            <person name="McPherson D."/>
            <person name="Merkulov G."/>
            <person name="Milshina N.V."/>
            <person name="Mobarry C."/>
            <person name="Morris J."/>
            <person name="Moshrefi A."/>
            <person name="Mount S.M."/>
            <person name="Moy M."/>
            <person name="Murphy B."/>
            <person name="Murphy L."/>
            <person name="Muzny D.M."/>
            <person name="Nelson D.L."/>
            <person name="Nelson D.R."/>
            <person name="Nelson K.A."/>
            <person name="Nixon K."/>
            <person name="Nusskern D.R."/>
            <person name="Pacleb J.M."/>
            <person name="Palazzolo M."/>
            <person name="Pittman G.S."/>
            <person name="Pan S."/>
            <person name="Pollard J."/>
            <person name="Puri V."/>
            <person name="Reese M.G."/>
            <person name="Reinert K."/>
            <person name="Remington K."/>
            <person name="Saunders R.D.C."/>
            <person name="Scheeler F."/>
            <person name="Shen H."/>
            <person name="Shue B.C."/>
            <person name="Siden-Kiamos I."/>
            <person name="Simpson M."/>
            <person name="Skupski M.P."/>
            <person name="Smith T.J."/>
            <person name="Spier E."/>
            <person name="Spradling A.C."/>
            <person name="Stapleton M."/>
            <person name="Strong R."/>
            <person name="Sun E."/>
            <person name="Svirskas R."/>
            <person name="Tector C."/>
            <person name="Turner R."/>
            <person name="Venter E."/>
            <person name="Wang A.H."/>
            <person name="Wang X."/>
            <person name="Wang Z.-Y."/>
            <person name="Wassarman D.A."/>
            <person name="Weinstock G.M."/>
            <person name="Weissenbach J."/>
            <person name="Williams S.M."/>
            <person name="Woodage T."/>
            <person name="Worley K.C."/>
            <person name="Wu D."/>
            <person name="Yang S."/>
            <person name="Yao Q.A."/>
            <person name="Ye J."/>
            <person name="Yeh R.-F."/>
            <person name="Zaveri J.S."/>
            <person name="Zhan M."/>
            <person name="Zhang G."/>
            <person name="Zhao Q."/>
            <person name="Zheng L."/>
            <person name="Zheng X.H."/>
            <person name="Zhong F.N."/>
            <person name="Zhong W."/>
            <person name="Zhou X."/>
            <person name="Zhu S.C."/>
            <person name="Zhu X."/>
            <person name="Smith H.O."/>
            <person name="Gibbs R.A."/>
            <person name="Myers E.W."/>
            <person name="Rubin G.M."/>
            <person name="Venter J.C."/>
        </authorList>
    </citation>
    <scope>NUCLEOTIDE SEQUENCE [LARGE SCALE GENOMIC DNA]</scope>
    <source>
        <strain>Berkeley</strain>
    </source>
</reference>
<reference key="3">
    <citation type="journal article" date="2002" name="Genome Biol.">
        <title>Annotation of the Drosophila melanogaster euchromatic genome: a systematic review.</title>
        <authorList>
            <person name="Misra S."/>
            <person name="Crosby M.A."/>
            <person name="Mungall C.J."/>
            <person name="Matthews B.B."/>
            <person name="Campbell K.S."/>
            <person name="Hradecky P."/>
            <person name="Huang Y."/>
            <person name="Kaminker J.S."/>
            <person name="Millburn G.H."/>
            <person name="Prochnik S.E."/>
            <person name="Smith C.D."/>
            <person name="Tupy J.L."/>
            <person name="Whitfield E.J."/>
            <person name="Bayraktaroglu L."/>
            <person name="Berman B.P."/>
            <person name="Bettencourt B.R."/>
            <person name="Celniker S.E."/>
            <person name="de Grey A.D.N.J."/>
            <person name="Drysdale R.A."/>
            <person name="Harris N.L."/>
            <person name="Richter J."/>
            <person name="Russo S."/>
            <person name="Schroeder A.J."/>
            <person name="Shu S.Q."/>
            <person name="Stapleton M."/>
            <person name="Yamada C."/>
            <person name="Ashburner M."/>
            <person name="Gelbart W.M."/>
            <person name="Rubin G.M."/>
            <person name="Lewis S.E."/>
        </authorList>
    </citation>
    <scope>GENOME REANNOTATION</scope>
    <source>
        <strain>Berkeley</strain>
    </source>
</reference>
<reference key="4">
    <citation type="submission" date="2004-02" db="EMBL/GenBank/DDBJ databases">
        <authorList>
            <person name="Stapleton M."/>
            <person name="Carlson J.W."/>
            <person name="Chavez C."/>
            <person name="Frise E."/>
            <person name="George R.A."/>
            <person name="Pacleb J.M."/>
            <person name="Park S."/>
            <person name="Wan K.H."/>
            <person name="Yu C."/>
            <person name="Rubin G.M."/>
            <person name="Celniker S.E."/>
        </authorList>
    </citation>
    <scope>NUCLEOTIDE SEQUENCE [LARGE SCALE MRNA]</scope>
    <source>
        <strain>Berkeley</strain>
        <tissue>Testis</tissue>
    </source>
</reference>
<gene>
    <name type="primary">CkIIbeta2</name>
    <name type="ORF">CG8914</name>
</gene>
<feature type="chain" id="PRO_0000068246" description="Casein kinase II subunit beta'">
    <location>
        <begin position="1"/>
        <end position="219"/>
    </location>
</feature>
<feature type="modified residue" description="Phosphothreonine; by autocatalysis" evidence="2">
    <location>
        <position position="2"/>
    </location>
</feature>
<dbReference type="EMBL" id="U51209">
    <property type="protein sequence ID" value="AAD00080.1"/>
    <property type="molecule type" value="mRNA"/>
</dbReference>
<dbReference type="EMBL" id="AE013599">
    <property type="protein sequence ID" value="AAF57483.1"/>
    <property type="molecule type" value="Genomic_DNA"/>
</dbReference>
<dbReference type="EMBL" id="BT011563">
    <property type="protein sequence ID" value="AAS15699.1"/>
    <property type="molecule type" value="mRNA"/>
</dbReference>
<dbReference type="RefSeq" id="NP_477407.1">
    <property type="nucleotide sequence ID" value="NM_058059.4"/>
</dbReference>
<dbReference type="SMR" id="O96863"/>
<dbReference type="BioGRID" id="62955">
    <property type="interactions" value="5"/>
</dbReference>
<dbReference type="DIP" id="DIP-23339N"/>
<dbReference type="FunCoup" id="O96863">
    <property type="interactions" value="172"/>
</dbReference>
<dbReference type="IntAct" id="O96863">
    <property type="interactions" value="6"/>
</dbReference>
<dbReference type="STRING" id="7227.FBpp0085590"/>
<dbReference type="PaxDb" id="7227-FBpp0085590"/>
<dbReference type="DNASU" id="37300"/>
<dbReference type="EnsemblMetazoa" id="FBtr0086278">
    <property type="protein sequence ID" value="FBpp0085590"/>
    <property type="gene ID" value="FBgn0026136"/>
</dbReference>
<dbReference type="GeneID" id="37300"/>
<dbReference type="KEGG" id="dme:Dmel_CG8914"/>
<dbReference type="AGR" id="FB:FBgn0026136"/>
<dbReference type="CTD" id="37300"/>
<dbReference type="FlyBase" id="FBgn0026136">
    <property type="gene designation" value="CkIIbeta2"/>
</dbReference>
<dbReference type="VEuPathDB" id="VectorBase:FBgn0026136"/>
<dbReference type="eggNOG" id="KOG3092">
    <property type="taxonomic scope" value="Eukaryota"/>
</dbReference>
<dbReference type="GeneTree" id="ENSGT00390000003781"/>
<dbReference type="HOGENOM" id="CLU_034027_3_3_1"/>
<dbReference type="InParanoid" id="O96863"/>
<dbReference type="OMA" id="WIHWFCK"/>
<dbReference type="OrthoDB" id="3971593at2759"/>
<dbReference type="PhylomeDB" id="O96863"/>
<dbReference type="SignaLink" id="O96863"/>
<dbReference type="BioGRID-ORCS" id="37300">
    <property type="hits" value="0 hits in 3 CRISPR screens"/>
</dbReference>
<dbReference type="GenomeRNAi" id="37300"/>
<dbReference type="PRO" id="PR:O96863"/>
<dbReference type="Proteomes" id="UP000000803">
    <property type="component" value="Chromosome 2R"/>
</dbReference>
<dbReference type="Bgee" id="FBgn0026136">
    <property type="expression patterns" value="Expressed in early-mid elongation-stage spermatid (Drosophila) in testis and 19 other cell types or tissues"/>
</dbReference>
<dbReference type="GO" id="GO:0005737">
    <property type="term" value="C:cytoplasm"/>
    <property type="evidence" value="ECO:0000318"/>
    <property type="project" value="GO_Central"/>
</dbReference>
<dbReference type="GO" id="GO:0005956">
    <property type="term" value="C:protein kinase CK2 complex"/>
    <property type="evidence" value="ECO:0000250"/>
    <property type="project" value="FlyBase"/>
</dbReference>
<dbReference type="GO" id="GO:0019887">
    <property type="term" value="F:protein kinase regulator activity"/>
    <property type="evidence" value="ECO:0000250"/>
    <property type="project" value="FlyBase"/>
</dbReference>
<dbReference type="GO" id="GO:0016055">
    <property type="term" value="P:Wnt signaling pathway"/>
    <property type="evidence" value="ECO:0007669"/>
    <property type="project" value="UniProtKB-KW"/>
</dbReference>
<dbReference type="FunFam" id="1.10.1820.10:FF:000016">
    <property type="entry name" value="Casein kinase II beta2 subunit"/>
    <property type="match status" value="1"/>
</dbReference>
<dbReference type="FunFam" id="2.20.25.20:FF:000002">
    <property type="entry name" value="Casein kinase II subunit beta"/>
    <property type="match status" value="1"/>
</dbReference>
<dbReference type="Gene3D" id="2.20.25.20">
    <property type="match status" value="1"/>
</dbReference>
<dbReference type="Gene3D" id="1.10.1820.10">
    <property type="entry name" value="protein kinase ck2 holoenzyme, chain C, domain 1"/>
    <property type="match status" value="1"/>
</dbReference>
<dbReference type="InterPro" id="IPR016149">
    <property type="entry name" value="Casein_kin_II_reg-sub_N"/>
</dbReference>
<dbReference type="InterPro" id="IPR035991">
    <property type="entry name" value="Casein_kinase_II_beta-like"/>
</dbReference>
<dbReference type="InterPro" id="IPR000704">
    <property type="entry name" value="Casein_kinase_II_reg-sub"/>
</dbReference>
<dbReference type="PANTHER" id="PTHR11740">
    <property type="entry name" value="CASEIN KINASE II SUBUNIT BETA"/>
    <property type="match status" value="1"/>
</dbReference>
<dbReference type="PANTHER" id="PTHR11740:SF0">
    <property type="entry name" value="CASEIN KINASE II SUBUNIT BETA"/>
    <property type="match status" value="1"/>
</dbReference>
<dbReference type="Pfam" id="PF01214">
    <property type="entry name" value="CK_II_beta"/>
    <property type="match status" value="1"/>
</dbReference>
<dbReference type="PRINTS" id="PR00472">
    <property type="entry name" value="CASNKINASEII"/>
</dbReference>
<dbReference type="SMART" id="SM01085">
    <property type="entry name" value="CK_II_beta"/>
    <property type="match status" value="1"/>
</dbReference>
<dbReference type="SUPFAM" id="SSF57798">
    <property type="entry name" value="Casein kinase II beta subunit"/>
    <property type="match status" value="1"/>
</dbReference>
<dbReference type="PROSITE" id="PS01101">
    <property type="entry name" value="CK2_BETA"/>
    <property type="match status" value="1"/>
</dbReference>
<comment type="function">
    <text evidence="1">Participates in Wnt signaling (By similarity). Plays a complex role in regulating the basal catalytic activity of the alpha subunit.</text>
</comment>
<comment type="subunit">
    <text>Tetramer of two alpha and two beta' subunits.</text>
</comment>
<comment type="interaction">
    <interactant intactId="EBI-181456">
        <id>O96863</id>
    </interactant>
    <interactant intactId="EBI-93115">
        <id>P08181</id>
        <label>CkIIalpha</label>
    </interactant>
    <organismsDiffer>false</organismsDiffer>
    <experiments>4</experiments>
</comment>
<comment type="PTM">
    <text evidence="1">Phosphorylated by alpha subunit.</text>
</comment>
<comment type="similarity">
    <text evidence="2">Belongs to the casein kinase 2 subunit beta family.</text>
</comment>